<accession>P09326</accession>
<accession>Q5U055</accession>
<accession>Q8MGR0</accession>
<comment type="function">
    <text evidence="5 7 9 12">Glycosylphosphatidylinositol (GPI)-anchored cell surface glycoprotein that interacts via its N-terminal immunoglobulin domain with cell surface receptors including CD244/2B4 or CD2 to regulate immune cell function and activation (PubMed:12007789, PubMed:19494291, PubMed:27249817, PubMed:9841922). Participates in T-cell signaling transduction by associating with CD2 and efficiently bringing the Src family protein kinase LCK and LAT to the TCR/CD3 complex (PubMed:19494291). In turn, promotes LCK phosphorylation and subsequent activation (PubMed:12007789). Induces the phosphorylation of the cytoplasmic immunoreceptortyrosine switch motifs (ITSMs) of CD244 initiating a series of signaling events that leads to the generation of the immunological synapse and the directed release of cytolytic granules containing perforin and granzymes by T-lymphocytes and NK-cells (PubMed:27249817).</text>
</comment>
<comment type="subunit">
    <text evidence="5 7 9 12">Interacts with CD2 (PubMed:19494291). Interacts with CD244; this interaction is possible not only on different cells (trans interaction) but also on the same cell (cis interaction) (PubMed:27249817, PubMed:9841922). Interacts with LCK (PubMed:12007789).</text>
</comment>
<comment type="interaction">
    <interactant intactId="EBI-714770">
        <id>P09326</id>
    </interactant>
    <interactant intactId="EBI-1580565">
        <id>Q9BZW8</id>
        <label>CD244</label>
    </interactant>
    <organismsDiffer>false</organismsDiffer>
    <experiments>4</experiments>
</comment>
<comment type="subcellular location">
    <subcellularLocation>
        <location evidence="8 10">Cell membrane</location>
        <topology evidence="8">Lipid-anchor</topology>
        <topology evidence="8">GPI-anchor</topology>
    </subcellularLocation>
    <subcellularLocation>
        <location evidence="5">Membrane raft</location>
    </subcellularLocation>
    <subcellularLocation>
        <location evidence="11">Secreted</location>
    </subcellularLocation>
</comment>
<comment type="alternative products">
    <event type="alternative splicing"/>
    <isoform>
        <id>P09326-1</id>
        <name>1</name>
        <sequence type="displayed"/>
    </isoform>
    <isoform>
        <id>P09326-2</id>
        <name>2</name>
        <sequence type="described" ref="VSP_055598 VSP_055599"/>
    </isoform>
</comment>
<comment type="tissue specificity">
    <text evidence="13">Widely expressed on all hematopoietic cells.</text>
</comment>
<comment type="induction">
    <text evidence="10">By IFN-alpha/beta and IFN-gamma both at the level of CD48 mRNA and cell surface expression.</text>
</comment>
<dbReference type="EMBL" id="X06341">
    <property type="protein sequence ID" value="CAA29647.1"/>
    <property type="molecule type" value="mRNA"/>
</dbReference>
<dbReference type="EMBL" id="M59904">
    <property type="protein sequence ID" value="AAA62834.1"/>
    <property type="molecule type" value="mRNA"/>
</dbReference>
<dbReference type="EMBL" id="M37766">
    <property type="protein sequence ID" value="AAA36211.1"/>
    <property type="molecule type" value="mRNA"/>
</dbReference>
<dbReference type="EMBL" id="BT019813">
    <property type="protein sequence ID" value="AAV38616.1"/>
    <property type="molecule type" value="mRNA"/>
</dbReference>
<dbReference type="EMBL" id="AL121985">
    <property type="status" value="NOT_ANNOTATED_CDS"/>
    <property type="molecule type" value="Genomic_DNA"/>
</dbReference>
<dbReference type="EMBL" id="CH471121">
    <property type="protein sequence ID" value="EAW52705.1"/>
    <property type="molecule type" value="Genomic_DNA"/>
</dbReference>
<dbReference type="EMBL" id="BC016182">
    <property type="protein sequence ID" value="AAH16182.1"/>
    <property type="molecule type" value="mRNA"/>
</dbReference>
<dbReference type="EMBL" id="BC030224">
    <property type="protein sequence ID" value="AAH30224.1"/>
    <property type="molecule type" value="mRNA"/>
</dbReference>
<dbReference type="EMBL" id="M63911">
    <property type="protein sequence ID" value="AAA35602.1"/>
    <property type="molecule type" value="Genomic_DNA"/>
</dbReference>
<dbReference type="CCDS" id="CCDS1208.1">
    <molecule id="P09326-1"/>
</dbReference>
<dbReference type="PIR" id="A53244">
    <property type="entry name" value="A53244"/>
</dbReference>
<dbReference type="RefSeq" id="NP_001769.2">
    <molecule id="P09326-1"/>
    <property type="nucleotide sequence ID" value="NM_001778.3"/>
</dbReference>
<dbReference type="PDB" id="2EDO">
    <property type="method" value="NMR"/>
    <property type="chains" value="A=27-140"/>
</dbReference>
<dbReference type="PDBsum" id="2EDO"/>
<dbReference type="SMR" id="P09326"/>
<dbReference type="BioGRID" id="107400">
    <property type="interactions" value="47"/>
</dbReference>
<dbReference type="FunCoup" id="P09326">
    <property type="interactions" value="508"/>
</dbReference>
<dbReference type="IntAct" id="P09326">
    <property type="interactions" value="31"/>
</dbReference>
<dbReference type="STRING" id="9606.ENSP00000484431"/>
<dbReference type="TCDB" id="8.A.23.1.36">
    <property type="family name" value="the basigin (basigin) family"/>
</dbReference>
<dbReference type="GlyConnect" id="1926">
    <property type="glycosylation" value="7 N-Linked glycans (3 sites)"/>
</dbReference>
<dbReference type="GlyCosmos" id="P09326">
    <property type="glycosylation" value="7 sites, 7 glycans"/>
</dbReference>
<dbReference type="GlyGen" id="P09326">
    <property type="glycosylation" value="7 sites, 14 N-linked glycans (4 sites)"/>
</dbReference>
<dbReference type="iPTMnet" id="P09326"/>
<dbReference type="PhosphoSitePlus" id="P09326"/>
<dbReference type="SwissPalm" id="P09326"/>
<dbReference type="BioMuta" id="CD48"/>
<dbReference type="DMDM" id="114871"/>
<dbReference type="CPTAC" id="CPTAC-1199"/>
<dbReference type="MassIVE" id="P09326"/>
<dbReference type="PaxDb" id="9606-ENSP00000484431"/>
<dbReference type="PeptideAtlas" id="P09326"/>
<dbReference type="ProteomicsDB" id="52212">
    <molecule id="P09326-1"/>
</dbReference>
<dbReference type="ProteomicsDB" id="71445"/>
<dbReference type="TopDownProteomics" id="P09326-1">
    <molecule id="P09326-1"/>
</dbReference>
<dbReference type="Antibodypedia" id="3737">
    <property type="antibodies" value="1257 antibodies from 48 providers"/>
</dbReference>
<dbReference type="CPTC" id="P09326">
    <property type="antibodies" value="1 antibody"/>
</dbReference>
<dbReference type="DNASU" id="962"/>
<dbReference type="Ensembl" id="ENST00000368045.3">
    <molecule id="P09326-2"/>
    <property type="protein sequence ID" value="ENSP00000357024.3"/>
    <property type="gene ID" value="ENSG00000117091.10"/>
</dbReference>
<dbReference type="Ensembl" id="ENST00000368046.8">
    <molecule id="P09326-1"/>
    <property type="protein sequence ID" value="ENSP00000357025.3"/>
    <property type="gene ID" value="ENSG00000117091.10"/>
</dbReference>
<dbReference type="GeneID" id="962"/>
<dbReference type="KEGG" id="hsa:962"/>
<dbReference type="MANE-Select" id="ENST00000368046.8">
    <property type="protein sequence ID" value="ENSP00000357025.3"/>
    <property type="RefSeq nucleotide sequence ID" value="NM_001778.4"/>
    <property type="RefSeq protein sequence ID" value="NP_001769.2"/>
</dbReference>
<dbReference type="UCSC" id="uc001fwn.4">
    <molecule id="P09326-1"/>
    <property type="organism name" value="human"/>
</dbReference>
<dbReference type="AGR" id="HGNC:1683"/>
<dbReference type="CTD" id="962"/>
<dbReference type="DisGeNET" id="962"/>
<dbReference type="GeneCards" id="CD48"/>
<dbReference type="HGNC" id="HGNC:1683">
    <property type="gene designation" value="CD48"/>
</dbReference>
<dbReference type="HPA" id="ENSG00000117091">
    <property type="expression patterns" value="Group enriched (bone marrow, lymphoid tissue)"/>
</dbReference>
<dbReference type="MIM" id="109530">
    <property type="type" value="gene"/>
</dbReference>
<dbReference type="neXtProt" id="NX_P09326"/>
<dbReference type="OpenTargets" id="ENSG00000117091"/>
<dbReference type="PharmGKB" id="PA26223"/>
<dbReference type="VEuPathDB" id="HostDB:ENSG00000117091"/>
<dbReference type="eggNOG" id="ENOG502SB68">
    <property type="taxonomic scope" value="Eukaryota"/>
</dbReference>
<dbReference type="GeneTree" id="ENSGT01030000234540"/>
<dbReference type="HOGENOM" id="CLU_099885_0_0_1"/>
<dbReference type="InParanoid" id="P09326"/>
<dbReference type="OMA" id="YFNTKFK"/>
<dbReference type="OrthoDB" id="9835793at2759"/>
<dbReference type="PAN-GO" id="P09326">
    <property type="GO annotations" value="2 GO annotations based on evolutionary models"/>
</dbReference>
<dbReference type="PhylomeDB" id="P09326"/>
<dbReference type="TreeFam" id="TF334964"/>
<dbReference type="PathwayCommons" id="P09326"/>
<dbReference type="Reactome" id="R-HSA-202733">
    <property type="pathway name" value="Cell surface interactions at the vascular wall"/>
</dbReference>
<dbReference type="SignaLink" id="P09326"/>
<dbReference type="BioGRID-ORCS" id="962">
    <property type="hits" value="15 hits in 1148 CRISPR screens"/>
</dbReference>
<dbReference type="EvolutionaryTrace" id="P09326"/>
<dbReference type="GeneWiki" id="CD48"/>
<dbReference type="GenomeRNAi" id="962"/>
<dbReference type="Pharos" id="P09326">
    <property type="development level" value="Tbio"/>
</dbReference>
<dbReference type="PRO" id="PR:P09326"/>
<dbReference type="Proteomes" id="UP000005640">
    <property type="component" value="Chromosome 1"/>
</dbReference>
<dbReference type="RNAct" id="P09326">
    <property type="molecule type" value="protein"/>
</dbReference>
<dbReference type="Bgee" id="ENSG00000117091">
    <property type="expression patterns" value="Expressed in leukocyte and 138 other cell types or tissues"/>
</dbReference>
<dbReference type="ExpressionAtlas" id="P09326">
    <property type="expression patterns" value="baseline and differential"/>
</dbReference>
<dbReference type="GO" id="GO:0070062">
    <property type="term" value="C:extracellular exosome"/>
    <property type="evidence" value="ECO:0007005"/>
    <property type="project" value="UniProtKB"/>
</dbReference>
<dbReference type="GO" id="GO:0016020">
    <property type="term" value="C:membrane"/>
    <property type="evidence" value="ECO:0007005"/>
    <property type="project" value="UniProtKB"/>
</dbReference>
<dbReference type="GO" id="GO:0045121">
    <property type="term" value="C:membrane raft"/>
    <property type="evidence" value="ECO:0000314"/>
    <property type="project" value="UniProtKB"/>
</dbReference>
<dbReference type="GO" id="GO:0005886">
    <property type="term" value="C:plasma membrane"/>
    <property type="evidence" value="ECO:0000304"/>
    <property type="project" value="UniProtKB"/>
</dbReference>
<dbReference type="GO" id="GO:0098552">
    <property type="term" value="C:side of membrane"/>
    <property type="evidence" value="ECO:0007669"/>
    <property type="project" value="UniProtKB-KW"/>
</dbReference>
<dbReference type="GO" id="GO:0048018">
    <property type="term" value="F:receptor ligand activity"/>
    <property type="evidence" value="ECO:0000314"/>
    <property type="project" value="UniProt"/>
</dbReference>
<dbReference type="GO" id="GO:0006952">
    <property type="term" value="P:defense response"/>
    <property type="evidence" value="ECO:0000304"/>
    <property type="project" value="ProtInc"/>
</dbReference>
<dbReference type="GO" id="GO:0006955">
    <property type="term" value="P:immune response"/>
    <property type="evidence" value="ECO:0000318"/>
    <property type="project" value="GO_Central"/>
</dbReference>
<dbReference type="GO" id="GO:0030101">
    <property type="term" value="P:natural killer cell activation"/>
    <property type="evidence" value="ECO:0000314"/>
    <property type="project" value="UniProt"/>
</dbReference>
<dbReference type="CDD" id="cd05775">
    <property type="entry name" value="IgV_CD2_like_N"/>
    <property type="match status" value="1"/>
</dbReference>
<dbReference type="FunFam" id="2.60.40.10:FF:001954">
    <property type="entry name" value="CD48 antigen"/>
    <property type="match status" value="1"/>
</dbReference>
<dbReference type="FunFam" id="2.60.40.10:FF:002202">
    <property type="entry name" value="CD48 antigen"/>
    <property type="match status" value="1"/>
</dbReference>
<dbReference type="Gene3D" id="2.60.40.10">
    <property type="entry name" value="Immunoglobulins"/>
    <property type="match status" value="2"/>
</dbReference>
<dbReference type="InterPro" id="IPR015631">
    <property type="entry name" value="CD2/SLAM_rcpt"/>
</dbReference>
<dbReference type="InterPro" id="IPR007110">
    <property type="entry name" value="Ig-like_dom"/>
</dbReference>
<dbReference type="InterPro" id="IPR036179">
    <property type="entry name" value="Ig-like_dom_sf"/>
</dbReference>
<dbReference type="InterPro" id="IPR013783">
    <property type="entry name" value="Ig-like_fold"/>
</dbReference>
<dbReference type="InterPro" id="IPR003599">
    <property type="entry name" value="Ig_sub"/>
</dbReference>
<dbReference type="InterPro" id="IPR013106">
    <property type="entry name" value="Ig_V-set"/>
</dbReference>
<dbReference type="PANTHER" id="PTHR12080:SF134">
    <property type="entry name" value="CD48 ANTIGEN"/>
    <property type="match status" value="1"/>
</dbReference>
<dbReference type="PANTHER" id="PTHR12080">
    <property type="entry name" value="SIGNALING LYMPHOCYTIC ACTIVATION MOLECULE"/>
    <property type="match status" value="1"/>
</dbReference>
<dbReference type="Pfam" id="PF13895">
    <property type="entry name" value="Ig_2"/>
    <property type="match status" value="1"/>
</dbReference>
<dbReference type="Pfam" id="PF07686">
    <property type="entry name" value="V-set"/>
    <property type="match status" value="1"/>
</dbReference>
<dbReference type="SMART" id="SM00409">
    <property type="entry name" value="IG"/>
    <property type="match status" value="1"/>
</dbReference>
<dbReference type="SUPFAM" id="SSF48726">
    <property type="entry name" value="Immunoglobulin"/>
    <property type="match status" value="2"/>
</dbReference>
<dbReference type="PROSITE" id="PS50835">
    <property type="entry name" value="IG_LIKE"/>
    <property type="match status" value="1"/>
</dbReference>
<proteinExistence type="evidence at protein level"/>
<reference key="1">
    <citation type="journal article" date="1987" name="EMBO J.">
        <title>Molecular cloning of the lymphocyte activation marker Blast-1.</title>
        <authorList>
            <person name="Staunton D.E."/>
            <person name="Thorley-Lawson D.A."/>
        </authorList>
    </citation>
    <scope>NUCLEOTIDE SEQUENCE [MRNA] (ISOFORM 1)</scope>
</reference>
<reference key="2">
    <citation type="journal article" date="1991" name="Immunogenetics">
        <title>The isolation of cDNA clones for CD48.</title>
        <authorList>
            <person name="Vaughan H.A."/>
            <person name="Henning M.M."/>
            <person name="Purcell D.F.J."/>
            <person name="McKenzie I.F.C."/>
            <person name="Sandrin M.S."/>
        </authorList>
    </citation>
    <scope>NUCLEOTIDE SEQUENCE [MRNA] (ISOFORM 1)</scope>
    <scope>SUBCELLULAR LOCATION</scope>
</reference>
<reference key="3">
    <citation type="journal article" date="1991" name="Immunogenetics">
        <title>The human leucocyte antigen CD48 (MEM-102) is closely related to the activation marker Blast-1.</title>
        <authorList>
            <person name="Korinek V."/>
            <person name="Stefanova I."/>
            <person name="Angelisova P."/>
            <person name="Hilbert I."/>
            <person name="Horejsi V."/>
        </authorList>
    </citation>
    <scope>NUCLEOTIDE SEQUENCE [MRNA] (ISOFORM 1)</scope>
</reference>
<reference key="4">
    <citation type="submission" date="2004-10" db="EMBL/GenBank/DDBJ databases">
        <title>Cloning of human full-length CDSs in BD Creator(TM) system donor vector.</title>
        <authorList>
            <person name="Kalnine N."/>
            <person name="Chen X."/>
            <person name="Rolfs A."/>
            <person name="Halleck A."/>
            <person name="Hines L."/>
            <person name="Eisenstein S."/>
            <person name="Koundinya M."/>
            <person name="Raphael J."/>
            <person name="Moreira D."/>
            <person name="Kelley T."/>
            <person name="LaBaer J."/>
            <person name="Lin Y."/>
            <person name="Phelan M."/>
            <person name="Farmer A."/>
        </authorList>
    </citation>
    <scope>NUCLEOTIDE SEQUENCE [LARGE SCALE MRNA] (ISOFORM 1)</scope>
</reference>
<reference key="5">
    <citation type="journal article" date="2006" name="Nature">
        <title>The DNA sequence and biological annotation of human chromosome 1.</title>
        <authorList>
            <person name="Gregory S.G."/>
            <person name="Barlow K.F."/>
            <person name="McLay K.E."/>
            <person name="Kaul R."/>
            <person name="Swarbreck D."/>
            <person name="Dunham A."/>
            <person name="Scott C.E."/>
            <person name="Howe K.L."/>
            <person name="Woodfine K."/>
            <person name="Spencer C.C.A."/>
            <person name="Jones M.C."/>
            <person name="Gillson C."/>
            <person name="Searle S."/>
            <person name="Zhou Y."/>
            <person name="Kokocinski F."/>
            <person name="McDonald L."/>
            <person name="Evans R."/>
            <person name="Phillips K."/>
            <person name="Atkinson A."/>
            <person name="Cooper R."/>
            <person name="Jones C."/>
            <person name="Hall R.E."/>
            <person name="Andrews T.D."/>
            <person name="Lloyd C."/>
            <person name="Ainscough R."/>
            <person name="Almeida J.P."/>
            <person name="Ambrose K.D."/>
            <person name="Anderson F."/>
            <person name="Andrew R.W."/>
            <person name="Ashwell R.I.S."/>
            <person name="Aubin K."/>
            <person name="Babbage A.K."/>
            <person name="Bagguley C.L."/>
            <person name="Bailey J."/>
            <person name="Beasley H."/>
            <person name="Bethel G."/>
            <person name="Bird C.P."/>
            <person name="Bray-Allen S."/>
            <person name="Brown J.Y."/>
            <person name="Brown A.J."/>
            <person name="Buckley D."/>
            <person name="Burton J."/>
            <person name="Bye J."/>
            <person name="Carder C."/>
            <person name="Chapman J.C."/>
            <person name="Clark S.Y."/>
            <person name="Clarke G."/>
            <person name="Clee C."/>
            <person name="Cobley V."/>
            <person name="Collier R.E."/>
            <person name="Corby N."/>
            <person name="Coville G.J."/>
            <person name="Davies J."/>
            <person name="Deadman R."/>
            <person name="Dunn M."/>
            <person name="Earthrowl M."/>
            <person name="Ellington A.G."/>
            <person name="Errington H."/>
            <person name="Frankish A."/>
            <person name="Frankland J."/>
            <person name="French L."/>
            <person name="Garner P."/>
            <person name="Garnett J."/>
            <person name="Gay L."/>
            <person name="Ghori M.R.J."/>
            <person name="Gibson R."/>
            <person name="Gilby L.M."/>
            <person name="Gillett W."/>
            <person name="Glithero R.J."/>
            <person name="Grafham D.V."/>
            <person name="Griffiths C."/>
            <person name="Griffiths-Jones S."/>
            <person name="Grocock R."/>
            <person name="Hammond S."/>
            <person name="Harrison E.S.I."/>
            <person name="Hart E."/>
            <person name="Haugen E."/>
            <person name="Heath P.D."/>
            <person name="Holmes S."/>
            <person name="Holt K."/>
            <person name="Howden P.J."/>
            <person name="Hunt A.R."/>
            <person name="Hunt S.E."/>
            <person name="Hunter G."/>
            <person name="Isherwood J."/>
            <person name="James R."/>
            <person name="Johnson C."/>
            <person name="Johnson D."/>
            <person name="Joy A."/>
            <person name="Kay M."/>
            <person name="Kershaw J.K."/>
            <person name="Kibukawa M."/>
            <person name="Kimberley A.M."/>
            <person name="King A."/>
            <person name="Knights A.J."/>
            <person name="Lad H."/>
            <person name="Laird G."/>
            <person name="Lawlor S."/>
            <person name="Leongamornlert D.A."/>
            <person name="Lloyd D.M."/>
            <person name="Loveland J."/>
            <person name="Lovell J."/>
            <person name="Lush M.J."/>
            <person name="Lyne R."/>
            <person name="Martin S."/>
            <person name="Mashreghi-Mohammadi M."/>
            <person name="Matthews L."/>
            <person name="Matthews N.S.W."/>
            <person name="McLaren S."/>
            <person name="Milne S."/>
            <person name="Mistry S."/>
            <person name="Moore M.J.F."/>
            <person name="Nickerson T."/>
            <person name="O'Dell C.N."/>
            <person name="Oliver K."/>
            <person name="Palmeiri A."/>
            <person name="Palmer S.A."/>
            <person name="Parker A."/>
            <person name="Patel D."/>
            <person name="Pearce A.V."/>
            <person name="Peck A.I."/>
            <person name="Pelan S."/>
            <person name="Phelps K."/>
            <person name="Phillimore B.J."/>
            <person name="Plumb R."/>
            <person name="Rajan J."/>
            <person name="Raymond C."/>
            <person name="Rouse G."/>
            <person name="Saenphimmachak C."/>
            <person name="Sehra H.K."/>
            <person name="Sheridan E."/>
            <person name="Shownkeen R."/>
            <person name="Sims S."/>
            <person name="Skuce C.D."/>
            <person name="Smith M."/>
            <person name="Steward C."/>
            <person name="Subramanian S."/>
            <person name="Sycamore N."/>
            <person name="Tracey A."/>
            <person name="Tromans A."/>
            <person name="Van Helmond Z."/>
            <person name="Wall M."/>
            <person name="Wallis J.M."/>
            <person name="White S."/>
            <person name="Whitehead S.L."/>
            <person name="Wilkinson J.E."/>
            <person name="Willey D.L."/>
            <person name="Williams H."/>
            <person name="Wilming L."/>
            <person name="Wray P.W."/>
            <person name="Wu Z."/>
            <person name="Coulson A."/>
            <person name="Vaudin M."/>
            <person name="Sulston J.E."/>
            <person name="Durbin R.M."/>
            <person name="Hubbard T."/>
            <person name="Wooster R."/>
            <person name="Dunham I."/>
            <person name="Carter N.P."/>
            <person name="McVean G."/>
            <person name="Ross M.T."/>
            <person name="Harrow J."/>
            <person name="Olson M.V."/>
            <person name="Beck S."/>
            <person name="Rogers J."/>
            <person name="Bentley D.R."/>
        </authorList>
    </citation>
    <scope>NUCLEOTIDE SEQUENCE [LARGE SCALE GENOMIC DNA]</scope>
</reference>
<reference key="6">
    <citation type="submission" date="2005-09" db="EMBL/GenBank/DDBJ databases">
        <authorList>
            <person name="Mural R.J."/>
            <person name="Istrail S."/>
            <person name="Sutton G.G."/>
            <person name="Florea L."/>
            <person name="Halpern A.L."/>
            <person name="Mobarry C.M."/>
            <person name="Lippert R."/>
            <person name="Walenz B."/>
            <person name="Shatkay H."/>
            <person name="Dew I."/>
            <person name="Miller J.R."/>
            <person name="Flanigan M.J."/>
            <person name="Edwards N.J."/>
            <person name="Bolanos R."/>
            <person name="Fasulo D."/>
            <person name="Halldorsson B.V."/>
            <person name="Hannenhalli S."/>
            <person name="Turner R."/>
            <person name="Yooseph S."/>
            <person name="Lu F."/>
            <person name="Nusskern D.R."/>
            <person name="Shue B.C."/>
            <person name="Zheng X.H."/>
            <person name="Zhong F."/>
            <person name="Delcher A.L."/>
            <person name="Huson D.H."/>
            <person name="Kravitz S.A."/>
            <person name="Mouchard L."/>
            <person name="Reinert K."/>
            <person name="Remington K.A."/>
            <person name="Clark A.G."/>
            <person name="Waterman M.S."/>
            <person name="Eichler E.E."/>
            <person name="Adams M.D."/>
            <person name="Hunkapiller M.W."/>
            <person name="Myers E.W."/>
            <person name="Venter J.C."/>
        </authorList>
    </citation>
    <scope>NUCLEOTIDE SEQUENCE [LARGE SCALE GENOMIC DNA]</scope>
</reference>
<reference key="7">
    <citation type="journal article" date="2004" name="Genome Res.">
        <title>The status, quality, and expansion of the NIH full-length cDNA project: the Mammalian Gene Collection (MGC).</title>
        <authorList>
            <consortium name="The MGC Project Team"/>
        </authorList>
    </citation>
    <scope>NUCLEOTIDE SEQUENCE [LARGE SCALE MRNA] (ISOFORMS 1 AND 2)</scope>
    <source>
        <tissue>B-cell</tissue>
        <tissue>Pancreas</tissue>
    </source>
</reference>
<reference key="8">
    <citation type="journal article" date="1991" name="Mol. Cell. Biol.">
        <title>Characterization of the Epstein-Barr virus-inducible gene encoding the human leukocyte adhesion and activation antigen BLAST-1 (CD48).</title>
        <authorList>
            <person name="Fisher R.C."/>
            <person name="Thorley-Lawson D.A."/>
        </authorList>
    </citation>
    <scope>NUCLEOTIDE SEQUENCE [GENOMIC DNA] OF 1-27</scope>
</reference>
<reference key="9">
    <citation type="journal article" date="1991" name="J. Exp. Med.">
        <title>TCT.1, a target molecule for gamma/delta T cells, is encoded by an immunoglobulin superfamily gene (Blast-1) located in the CD1 region of human chromosome 1.</title>
        <authorList>
            <person name="del Porto P."/>
            <person name="Mami-Chouaib F."/>
            <person name="Bruneau J.-M."/>
            <person name="Jitsukawa S."/>
            <person name="Dumas J."/>
            <person name="Harnois M."/>
            <person name="Hercend T."/>
        </authorList>
    </citation>
    <scope>PARTIAL PROTEIN SEQUENCE</scope>
</reference>
<reference key="10">
    <citation type="journal article" date="1997" name="J. Clin. Immunol.">
        <title>Detection of a soluble form of the leukocyte surface antigen CD48 in plasma and its elevation in patients with lymphoid leukemias and arthritis.</title>
        <authorList>
            <person name="Smith G.M."/>
            <person name="Biggs J."/>
            <person name="Norris B."/>
            <person name="Anderson-Stewart P."/>
            <person name="Ward R."/>
        </authorList>
    </citation>
    <scope>SUBCELLULAR LOCATION</scope>
</reference>
<reference key="11">
    <citation type="journal article" date="1997" name="J. Interferon Cytokine Res.">
        <title>Both human alpha/beta and gamma interferons upregulate the expression of CD48 cell surface molecules.</title>
        <authorList>
            <person name="Tissot C."/>
            <person name="Rebouissou C."/>
            <person name="Klein B."/>
            <person name="Mechti N."/>
        </authorList>
    </citation>
    <scope>INDUCTION BY INTERFERONS</scope>
    <scope>SUBCELLULAR LOCATION</scope>
</reference>
<reference key="12">
    <citation type="journal article" date="1998" name="Acta Paediatr. Jpn. Overseas Ed.">
        <title>CD48 expression on leukocytes in infectious diseases: flow cytometric analysis of surface antigen.</title>
        <authorList>
            <person name="Katsuura M."/>
            <person name="Shimizu Y."/>
            <person name="Akiba K."/>
            <person name="Kanazawa C."/>
            <person name="Mitsui T."/>
            <person name="Sendo D."/>
            <person name="Kawakami T."/>
            <person name="Hayasaka K."/>
            <person name="Yokoyama S."/>
        </authorList>
    </citation>
    <scope>TISSUE SPECIFICITY</scope>
</reference>
<reference key="13">
    <citation type="journal article" date="1998" name="J. Exp. Med.">
        <title>2B4, the natural killer and T cell immunoglobulin superfamily surface protein, is a ligand for CD48.</title>
        <authorList>
            <person name="Brown M.H."/>
            <person name="Boles K."/>
            <person name="van der Merwe P.A."/>
            <person name="Kumar V."/>
            <person name="Mathew P.A."/>
            <person name="Barclay A.N."/>
        </authorList>
    </citation>
    <scope>FUNCTION</scope>
    <scope>INTERACTION WITH CD244</scope>
</reference>
<reference key="14">
    <citation type="journal article" date="2002" name="Biochim. Biophys. Acta">
        <title>The oxygen-substituted palmitic acid analogue, 13-oxypalmitic acid, inhibits Lck localization to lipid rafts and T cell signaling.</title>
        <authorList>
            <person name="Hawash I.Y."/>
            <person name="Hu X.E."/>
            <person name="Adal A."/>
            <person name="Cassady J.M."/>
            <person name="Geahlen R.L."/>
            <person name="Harrison M.L."/>
        </authorList>
    </citation>
    <scope>FUNCTION</scope>
    <scope>INTERACTION WITH LCK</scope>
    <scope>SUBCELLULAR LOCATION</scope>
</reference>
<reference key="15">
    <citation type="journal article" date="2009" name="Nat. Biotechnol.">
        <title>Mass-spectrometric identification and relative quantification of N-linked cell surface glycoproteins.</title>
        <authorList>
            <person name="Wollscheid B."/>
            <person name="Bausch-Fluck D."/>
            <person name="Henderson C."/>
            <person name="O'Brien R."/>
            <person name="Bibel M."/>
            <person name="Schiess R."/>
            <person name="Aebersold R."/>
            <person name="Watts J.D."/>
        </authorList>
    </citation>
    <scope>GLYCOSYLATION [LARGE SCALE ANALYSIS] AT ASN-104 AND ASN-189</scope>
    <source>
        <tissue>Leukemic T-cell</tissue>
    </source>
</reference>
<reference key="16">
    <citation type="journal article" date="2009" name="J. Immunol.">
        <title>Sequential cooperation of CD2 and CD48 in the buildup of the early TCR signalosome.</title>
        <authorList>
            <person name="Muhammad A."/>
            <person name="Schiller H.B."/>
            <person name="Forster F."/>
            <person name="Eckerstorfer P."/>
            <person name="Geyeregger R."/>
            <person name="Leksa V."/>
            <person name="Zlabinger G.J."/>
            <person name="Sibilia M."/>
            <person name="Sonnleitner A."/>
            <person name="Paster W."/>
            <person name="Stockinger H."/>
        </authorList>
    </citation>
    <scope>FUNCTION</scope>
</reference>
<reference key="17">
    <citation type="journal article" date="2016" name="Open Biol.">
        <title>Modulation of natural killer cell functions by interactions between 2B4 and CD48 in cis and in trans.</title>
        <authorList>
            <person name="Claus M."/>
            <person name="Wingert S."/>
            <person name="Watzl C."/>
        </authorList>
    </citation>
    <scope>FUNCTION</scope>
    <scope>INTERACTION WITH CD244</scope>
</reference>
<reference key="18">
    <citation type="submission" date="2007-08" db="PDB data bank">
        <title>Solution structure of the first Ig-like domain from human CD48 antigen.</title>
        <authorList>
            <consortium name="RIKEN structural genomics initiative (RSGI)"/>
        </authorList>
    </citation>
    <scope>STRUCTURE BY NMR OF 24-140</scope>
</reference>
<sequence length="243" mass="27683">MCSRGWDSCLALELLLLPLSLLVTSIQGHLVHMTVVSGSNVTLNISESLPENYKQLTWFYTFDQKIVEWDSRKSKYFESKFKGRVRLDPQSGALYISKVQKEDNSTYIMRVLKKTGNEQEWKIKLQVLDPVPKPVIKIEKIEDMDDNCYLKLSCVIPGESVNYTWYGDKRPFPKELQNSVLETTLMPHNYSRCYTCQVSNSVSSKNGTVCLSPPCTLARSFGVEWIASWLVVTVPTILGLLLT</sequence>
<organism>
    <name type="scientific">Homo sapiens</name>
    <name type="common">Human</name>
    <dbReference type="NCBI Taxonomy" id="9606"/>
    <lineage>
        <taxon>Eukaryota</taxon>
        <taxon>Metazoa</taxon>
        <taxon>Chordata</taxon>
        <taxon>Craniata</taxon>
        <taxon>Vertebrata</taxon>
        <taxon>Euteleostomi</taxon>
        <taxon>Mammalia</taxon>
        <taxon>Eutheria</taxon>
        <taxon>Euarchontoglires</taxon>
        <taxon>Primates</taxon>
        <taxon>Haplorrhini</taxon>
        <taxon>Catarrhini</taxon>
        <taxon>Hominidae</taxon>
        <taxon>Homo</taxon>
    </lineage>
</organism>
<evidence type="ECO:0000250" key="1"/>
<evidence type="ECO:0000250" key="2">
    <source>
        <dbReference type="UniProtKB" id="P10252"/>
    </source>
</evidence>
<evidence type="ECO:0000255" key="3"/>
<evidence type="ECO:0000255" key="4">
    <source>
        <dbReference type="PROSITE-ProRule" id="PRU00114"/>
    </source>
</evidence>
<evidence type="ECO:0000269" key="5">
    <source>
    </source>
</evidence>
<evidence type="ECO:0000269" key="6">
    <source>
    </source>
</evidence>
<evidence type="ECO:0000269" key="7">
    <source>
    </source>
</evidence>
<evidence type="ECO:0000269" key="8">
    <source>
    </source>
</evidence>
<evidence type="ECO:0000269" key="9">
    <source>
    </source>
</evidence>
<evidence type="ECO:0000269" key="10">
    <source>
    </source>
</evidence>
<evidence type="ECO:0000269" key="11">
    <source>
    </source>
</evidence>
<evidence type="ECO:0000269" key="12">
    <source>
    </source>
</evidence>
<evidence type="ECO:0000269" key="13">
    <source>
    </source>
</evidence>
<evidence type="ECO:0000303" key="14">
    <source>
    </source>
</evidence>
<evidence type="ECO:0000305" key="15"/>
<evidence type="ECO:0007829" key="16">
    <source>
        <dbReference type="PDB" id="2EDO"/>
    </source>
</evidence>
<keyword id="KW-0002">3D-structure</keyword>
<keyword id="KW-0025">Alternative splicing</keyword>
<keyword id="KW-1003">Cell membrane</keyword>
<keyword id="KW-0903">Direct protein sequencing</keyword>
<keyword id="KW-1015">Disulfide bond</keyword>
<keyword id="KW-0325">Glycoprotein</keyword>
<keyword id="KW-0336">GPI-anchor</keyword>
<keyword id="KW-0393">Immunoglobulin domain</keyword>
<keyword id="KW-0449">Lipoprotein</keyword>
<keyword id="KW-0472">Membrane</keyword>
<keyword id="KW-1267">Proteomics identification</keyword>
<keyword id="KW-1185">Reference proteome</keyword>
<keyword id="KW-0677">Repeat</keyword>
<keyword id="KW-0964">Secreted</keyword>
<keyword id="KW-0732">Signal</keyword>
<protein>
    <recommendedName>
        <fullName>CD48 antigen</fullName>
    </recommendedName>
    <alternativeName>
        <fullName>B-lymphocyte activation marker BLAST-1</fullName>
    </alternativeName>
    <alternativeName>
        <fullName>BCM1 surface antigen</fullName>
    </alternativeName>
    <alternativeName>
        <fullName>Leukocyte antigen MEM-102</fullName>
    </alternativeName>
    <alternativeName>
        <fullName>SLAM family member 2</fullName>
        <shortName>SLAMF2</shortName>
    </alternativeName>
    <alternativeName>
        <fullName>Signaling lymphocytic activation molecule 2</fullName>
    </alternativeName>
    <alternativeName>
        <fullName>TCT.1</fullName>
    </alternativeName>
    <cdAntigenName>CD48</cdAntigenName>
</protein>
<feature type="signal peptide" evidence="3">
    <location>
        <begin position="1"/>
        <end position="26"/>
    </location>
</feature>
<feature type="chain" id="PRO_0000014881" description="CD48 antigen">
    <location>
        <begin position="27"/>
        <end position="220"/>
    </location>
</feature>
<feature type="propeptide" id="PRO_0000014882" description="Removed in mature form" evidence="1">
    <location>
        <begin position="221"/>
        <end position="243"/>
    </location>
</feature>
<feature type="domain" description="Ig-like C2-type 1">
    <location>
        <begin position="29"/>
        <end position="127"/>
    </location>
</feature>
<feature type="domain" description="Ig-like C2-type 2">
    <location>
        <begin position="132"/>
        <end position="212"/>
    </location>
</feature>
<feature type="lipid moiety-binding region" description="GPI-anchor amidated serine" evidence="2">
    <location>
        <position position="220"/>
    </location>
</feature>
<feature type="glycosylation site" description="N-linked (GlcNAc...) asparagine" evidence="3">
    <location>
        <position position="40"/>
    </location>
</feature>
<feature type="glycosylation site" description="N-linked (GlcNAc...) asparagine" evidence="3">
    <location>
        <position position="44"/>
    </location>
</feature>
<feature type="glycosylation site" description="N-linked (GlcNAc...) asparagine" evidence="6">
    <location>
        <position position="104"/>
    </location>
</feature>
<feature type="glycosylation site" description="N-linked (GlcNAc...) asparagine" evidence="3">
    <location>
        <position position="162"/>
    </location>
</feature>
<feature type="glycosylation site" description="N-linked (GlcNAc...) asparagine" evidence="6">
    <location>
        <position position="189"/>
    </location>
</feature>
<feature type="disulfide bond" evidence="4">
    <location>
        <begin position="154"/>
        <end position="196"/>
    </location>
</feature>
<feature type="splice variant" id="VSP_055598" description="In isoform 2." evidence="14">
    <original>DPVPKPVIKIEKIEDMDDNCYLKLSCVIPGESVNYTWYGDK</original>
    <variation>GESGEPKSKSPLQWPQMDHCRASWEAWGTLGEEERKTSGQV</variation>
    <location>
        <begin position="129"/>
        <end position="169"/>
    </location>
</feature>
<feature type="splice variant" id="VSP_055599" description="In isoform 2." evidence="14">
    <location>
        <begin position="170"/>
        <end position="243"/>
    </location>
</feature>
<feature type="sequence variant" id="VAR_020082" description="In dbSNP:rs2295615.">
    <original>E</original>
    <variation>Q</variation>
    <location>
        <position position="102"/>
    </location>
</feature>
<feature type="sequence variant" id="VAR_049909" description="In dbSNP:rs16832307.">
    <original>L</original>
    <variation>S</variation>
    <location>
        <position position="241"/>
    </location>
</feature>
<feature type="sequence conflict" description="In Ref. 1; AAA62834." evidence="15" ref="1">
    <original>C</original>
    <variation>W</variation>
    <location>
        <position position="2"/>
    </location>
</feature>
<feature type="sequence conflict" description="In Ref. 3; CAA29647." evidence="15" ref="3">
    <original>I</original>
    <variation>N</variation>
    <location>
        <position position="66"/>
    </location>
</feature>
<feature type="strand" evidence="16">
    <location>
        <begin position="34"/>
        <end position="36"/>
    </location>
</feature>
<feature type="strand" evidence="16">
    <location>
        <begin position="41"/>
        <end position="43"/>
    </location>
</feature>
<feature type="strand" evidence="16">
    <location>
        <begin position="51"/>
        <end position="61"/>
    </location>
</feature>
<feature type="strand" evidence="16">
    <location>
        <begin position="64"/>
        <end position="69"/>
    </location>
</feature>
<feature type="strand" evidence="16">
    <location>
        <begin position="74"/>
        <end position="76"/>
    </location>
</feature>
<feature type="turn" evidence="16">
    <location>
        <begin position="80"/>
        <end position="84"/>
    </location>
</feature>
<feature type="turn" evidence="16">
    <location>
        <begin position="89"/>
        <end position="91"/>
    </location>
</feature>
<feature type="strand" evidence="16">
    <location>
        <begin position="94"/>
        <end position="98"/>
    </location>
</feature>
<feature type="helix" evidence="16">
    <location>
        <begin position="101"/>
        <end position="103"/>
    </location>
</feature>
<feature type="strand" evidence="16">
    <location>
        <begin position="105"/>
        <end position="113"/>
    </location>
</feature>
<feature type="turn" evidence="16">
    <location>
        <begin position="114"/>
        <end position="116"/>
    </location>
</feature>
<feature type="strand" evidence="16">
    <location>
        <begin position="117"/>
        <end position="120"/>
    </location>
</feature>
<feature type="strand" evidence="16">
    <location>
        <begin position="126"/>
        <end position="128"/>
    </location>
</feature>
<gene>
    <name type="primary">CD48</name>
    <name type="synonym">BCM1</name>
    <name type="synonym">BLAST1</name>
</gene>
<name>CD48_HUMAN</name>